<name>ARFK_ARATH</name>
<feature type="chain" id="PRO_0000111515" description="Auxin response factor 11">
    <location>
        <begin position="1"/>
        <end position="622"/>
    </location>
</feature>
<feature type="domain" description="PB1" evidence="3">
    <location>
        <begin position="511"/>
        <end position="594"/>
    </location>
</feature>
<feature type="DNA-binding region" description="TF-B3" evidence="2">
    <location>
        <begin position="145"/>
        <end position="247"/>
    </location>
</feature>
<feature type="region of interest" description="Disordered" evidence="4">
    <location>
        <begin position="358"/>
        <end position="398"/>
    </location>
</feature>
<feature type="region of interest" description="Disordered" evidence="4">
    <location>
        <begin position="483"/>
        <end position="513"/>
    </location>
</feature>
<feature type="compositionally biased region" description="Polar residues" evidence="4">
    <location>
        <begin position="376"/>
        <end position="387"/>
    </location>
</feature>
<feature type="compositionally biased region" description="Polar residues" evidence="4">
    <location>
        <begin position="483"/>
        <end position="511"/>
    </location>
</feature>
<feature type="splice variant" id="VSP_037315" description="In isoform 3." evidence="6">
    <location>
        <begin position="1"/>
        <end position="108"/>
    </location>
</feature>
<feature type="splice variant" id="VSP_037316" description="In isoform 2." evidence="7">
    <location>
        <begin position="1"/>
        <end position="21"/>
    </location>
</feature>
<feature type="splice variant" id="VSP_037317" description="In isoform 2." evidence="7">
    <original>WLKLIAVGWNL</original>
    <variation>MANVEADFRTS</variation>
    <location>
        <begin position="22"/>
        <end position="32"/>
    </location>
</feature>
<feature type="splice variant" id="VSP_037318" description="In isoform 3." evidence="6">
    <original>TDEVYAQITLQPEEDQS</original>
    <variation>MRPMRFTLRSHYNQKKI</variation>
    <location>
        <begin position="109"/>
        <end position="125"/>
    </location>
</feature>
<feature type="sequence conflict" description="In Ref. 4; BAF01593." evidence="8" ref="4">
    <original>T</original>
    <variation>A</variation>
    <location>
        <position position="141"/>
    </location>
</feature>
<feature type="sequence conflict" description="In Ref. 4; BAF01593." evidence="8" ref="4">
    <original>Q</original>
    <variation>H</variation>
    <location>
        <position position="493"/>
    </location>
</feature>
<evidence type="ECO:0000250" key="1"/>
<evidence type="ECO:0000255" key="2">
    <source>
        <dbReference type="PROSITE-ProRule" id="PRU00326"/>
    </source>
</evidence>
<evidence type="ECO:0000255" key="3">
    <source>
        <dbReference type="PROSITE-ProRule" id="PRU01081"/>
    </source>
</evidence>
<evidence type="ECO:0000256" key="4">
    <source>
        <dbReference type="SAM" id="MobiDB-lite"/>
    </source>
</evidence>
<evidence type="ECO:0000269" key="5">
    <source>
    </source>
</evidence>
<evidence type="ECO:0000303" key="6">
    <source>
    </source>
</evidence>
<evidence type="ECO:0000303" key="7">
    <source ref="5"/>
</evidence>
<evidence type="ECO:0000305" key="8"/>
<proteinExistence type="evidence at transcript level"/>
<organism>
    <name type="scientific">Arabidopsis thaliana</name>
    <name type="common">Mouse-ear cress</name>
    <dbReference type="NCBI Taxonomy" id="3702"/>
    <lineage>
        <taxon>Eukaryota</taxon>
        <taxon>Viridiplantae</taxon>
        <taxon>Streptophyta</taxon>
        <taxon>Embryophyta</taxon>
        <taxon>Tracheophyta</taxon>
        <taxon>Spermatophyta</taxon>
        <taxon>Magnoliopsida</taxon>
        <taxon>eudicotyledons</taxon>
        <taxon>Gunneridae</taxon>
        <taxon>Pentapetalae</taxon>
        <taxon>rosids</taxon>
        <taxon>malvids</taxon>
        <taxon>Brassicales</taxon>
        <taxon>Brassicaceae</taxon>
        <taxon>Camelineae</taxon>
        <taxon>Arabidopsis</taxon>
    </lineage>
</organism>
<protein>
    <recommendedName>
        <fullName>Auxin response factor 11</fullName>
    </recommendedName>
</protein>
<dbReference type="EMBL" id="AY669791">
    <property type="protein sequence ID" value="AAT67075.1"/>
    <property type="molecule type" value="mRNA"/>
</dbReference>
<dbReference type="EMBL" id="AC006418">
    <property type="protein sequence ID" value="AAD20164.1"/>
    <property type="molecule type" value="Genomic_DNA"/>
</dbReference>
<dbReference type="EMBL" id="AC006526">
    <property type="protein sequence ID" value="AAM15267.1"/>
    <property type="molecule type" value="Genomic_DNA"/>
</dbReference>
<dbReference type="EMBL" id="CP002685">
    <property type="protein sequence ID" value="AEC10714.1"/>
    <property type="molecule type" value="Genomic_DNA"/>
</dbReference>
<dbReference type="EMBL" id="CP002685">
    <property type="protein sequence ID" value="AEC10715.1"/>
    <property type="molecule type" value="Genomic_DNA"/>
</dbReference>
<dbReference type="EMBL" id="CP002685">
    <property type="protein sequence ID" value="AEC10716.1"/>
    <property type="molecule type" value="Genomic_DNA"/>
</dbReference>
<dbReference type="EMBL" id="AK229757">
    <property type="protein sequence ID" value="BAF01593.1"/>
    <property type="molecule type" value="mRNA"/>
</dbReference>
<dbReference type="EMBL" id="BX837073">
    <property type="status" value="NOT_ANNOTATED_CDS"/>
    <property type="molecule type" value="mRNA"/>
</dbReference>
<dbReference type="EMBL" id="AK229924">
    <property type="protein sequence ID" value="BAF01750.1"/>
    <property type="molecule type" value="mRNA"/>
</dbReference>
<dbReference type="PIR" id="A84904">
    <property type="entry name" value="A84904"/>
</dbReference>
<dbReference type="RefSeq" id="NP_001031548.1">
    <molecule id="Q9ZPY6-1"/>
    <property type="nucleotide sequence ID" value="NM_001036471.1"/>
</dbReference>
<dbReference type="RefSeq" id="NP_182176.2">
    <molecule id="Q9ZPY6-2"/>
    <property type="nucleotide sequence ID" value="NM_130218.5"/>
</dbReference>
<dbReference type="RefSeq" id="NP_973701.1">
    <molecule id="Q9ZPY6-3"/>
    <property type="nucleotide sequence ID" value="NM_201972.1"/>
</dbReference>
<dbReference type="SMR" id="Q9ZPY6"/>
<dbReference type="BioGRID" id="4599">
    <property type="interactions" value="2"/>
</dbReference>
<dbReference type="IntAct" id="Q9ZPY6">
    <property type="interactions" value="2"/>
</dbReference>
<dbReference type="STRING" id="3702.Q9ZPY6"/>
<dbReference type="GlyGen" id="Q9ZPY6">
    <property type="glycosylation" value="2 sites"/>
</dbReference>
<dbReference type="iPTMnet" id="Q9ZPY6"/>
<dbReference type="PaxDb" id="3702-AT2G46530.3"/>
<dbReference type="ProteomicsDB" id="246956">
    <molecule id="Q9ZPY6-1"/>
</dbReference>
<dbReference type="EnsemblPlants" id="AT2G46530.1">
    <molecule id="Q9ZPY6-2"/>
    <property type="protein sequence ID" value="AT2G46530.1"/>
    <property type="gene ID" value="AT2G46530"/>
</dbReference>
<dbReference type="EnsemblPlants" id="AT2G46530.2">
    <molecule id="Q9ZPY6-3"/>
    <property type="protein sequence ID" value="AT2G46530.2"/>
    <property type="gene ID" value="AT2G46530"/>
</dbReference>
<dbReference type="EnsemblPlants" id="AT2G46530.3">
    <molecule id="Q9ZPY6-1"/>
    <property type="protein sequence ID" value="AT2G46530.3"/>
    <property type="gene ID" value="AT2G46530"/>
</dbReference>
<dbReference type="GeneID" id="819264"/>
<dbReference type="Gramene" id="AT2G46530.1">
    <molecule id="Q9ZPY6-2"/>
    <property type="protein sequence ID" value="AT2G46530.1"/>
    <property type="gene ID" value="AT2G46530"/>
</dbReference>
<dbReference type="Gramene" id="AT2G46530.2">
    <molecule id="Q9ZPY6-3"/>
    <property type="protein sequence ID" value="AT2G46530.2"/>
    <property type="gene ID" value="AT2G46530"/>
</dbReference>
<dbReference type="Gramene" id="AT2G46530.3">
    <molecule id="Q9ZPY6-1"/>
    <property type="protein sequence ID" value="AT2G46530.3"/>
    <property type="gene ID" value="AT2G46530"/>
</dbReference>
<dbReference type="KEGG" id="ath:AT2G46530"/>
<dbReference type="Araport" id="AT2G46530"/>
<dbReference type="TAIR" id="AT2G46530">
    <property type="gene designation" value="ARF11"/>
</dbReference>
<dbReference type="eggNOG" id="ENOG502QTME">
    <property type="taxonomic scope" value="Eukaryota"/>
</dbReference>
<dbReference type="HOGENOM" id="CLU_002626_4_4_1"/>
<dbReference type="InParanoid" id="Q9ZPY6"/>
<dbReference type="OMA" id="CRVVHIH"/>
<dbReference type="PhylomeDB" id="Q9ZPY6"/>
<dbReference type="PRO" id="PR:Q9ZPY6"/>
<dbReference type="Proteomes" id="UP000006548">
    <property type="component" value="Chromosome 2"/>
</dbReference>
<dbReference type="ExpressionAtlas" id="Q9ZPY6">
    <property type="expression patterns" value="baseline and differential"/>
</dbReference>
<dbReference type="GO" id="GO:0005634">
    <property type="term" value="C:nucleus"/>
    <property type="evidence" value="ECO:0007669"/>
    <property type="project" value="UniProtKB-SubCell"/>
</dbReference>
<dbReference type="GO" id="GO:0009506">
    <property type="term" value="C:plasmodesma"/>
    <property type="evidence" value="ECO:0007005"/>
    <property type="project" value="TAIR"/>
</dbReference>
<dbReference type="GO" id="GO:0003700">
    <property type="term" value="F:DNA-binding transcription factor activity"/>
    <property type="evidence" value="ECO:0000250"/>
    <property type="project" value="TAIR"/>
</dbReference>
<dbReference type="GO" id="GO:0000976">
    <property type="term" value="F:transcription cis-regulatory region binding"/>
    <property type="evidence" value="ECO:0000353"/>
    <property type="project" value="TAIR"/>
</dbReference>
<dbReference type="GO" id="GO:0009734">
    <property type="term" value="P:auxin-activated signaling pathway"/>
    <property type="evidence" value="ECO:0007669"/>
    <property type="project" value="UniProtKB-KW"/>
</dbReference>
<dbReference type="CDD" id="cd10017">
    <property type="entry name" value="B3_DNA"/>
    <property type="match status" value="1"/>
</dbReference>
<dbReference type="FunFam" id="2.30.30.1040:FF:000001">
    <property type="entry name" value="Auxin response factor"/>
    <property type="match status" value="1"/>
</dbReference>
<dbReference type="FunFam" id="2.40.330.10:FF:000001">
    <property type="entry name" value="Auxin response factor"/>
    <property type="match status" value="1"/>
</dbReference>
<dbReference type="FunFam" id="3.10.20.90:FF:000047">
    <property type="entry name" value="Auxin response factor"/>
    <property type="match status" value="1"/>
</dbReference>
<dbReference type="Gene3D" id="2.30.30.1040">
    <property type="match status" value="1"/>
</dbReference>
<dbReference type="Gene3D" id="2.40.330.10">
    <property type="entry name" value="DNA-binding pseudobarrel domain"/>
    <property type="match status" value="1"/>
</dbReference>
<dbReference type="Gene3D" id="3.10.20.90">
    <property type="entry name" value="Phosphatidylinositol 3-kinase Catalytic Subunit, Chain A, domain 1"/>
    <property type="match status" value="1"/>
</dbReference>
<dbReference type="InterPro" id="IPR010525">
    <property type="entry name" value="ARF_dom"/>
</dbReference>
<dbReference type="InterPro" id="IPR044835">
    <property type="entry name" value="ARF_plant"/>
</dbReference>
<dbReference type="InterPro" id="IPR033389">
    <property type="entry name" value="AUX/IAA_dom"/>
</dbReference>
<dbReference type="InterPro" id="IPR003340">
    <property type="entry name" value="B3_DNA-bd"/>
</dbReference>
<dbReference type="InterPro" id="IPR015300">
    <property type="entry name" value="DNA-bd_pseudobarrel_sf"/>
</dbReference>
<dbReference type="InterPro" id="IPR053793">
    <property type="entry name" value="PB1-like"/>
</dbReference>
<dbReference type="PANTHER" id="PTHR31384:SF8">
    <property type="entry name" value="AUXIN RESPONSE FACTOR 11"/>
    <property type="match status" value="1"/>
</dbReference>
<dbReference type="PANTHER" id="PTHR31384">
    <property type="entry name" value="AUXIN RESPONSE FACTOR 4-RELATED"/>
    <property type="match status" value="1"/>
</dbReference>
<dbReference type="Pfam" id="PF06507">
    <property type="entry name" value="ARF_AD"/>
    <property type="match status" value="1"/>
</dbReference>
<dbReference type="Pfam" id="PF02309">
    <property type="entry name" value="AUX_IAA"/>
    <property type="match status" value="2"/>
</dbReference>
<dbReference type="Pfam" id="PF02362">
    <property type="entry name" value="B3"/>
    <property type="match status" value="1"/>
</dbReference>
<dbReference type="SMART" id="SM01019">
    <property type="entry name" value="B3"/>
    <property type="match status" value="1"/>
</dbReference>
<dbReference type="SUPFAM" id="SSF54277">
    <property type="entry name" value="CAD &amp; PB1 domains"/>
    <property type="match status" value="1"/>
</dbReference>
<dbReference type="SUPFAM" id="SSF101936">
    <property type="entry name" value="DNA-binding pseudobarrel domain"/>
    <property type="match status" value="1"/>
</dbReference>
<dbReference type="PROSITE" id="PS50863">
    <property type="entry name" value="B3"/>
    <property type="match status" value="1"/>
</dbReference>
<dbReference type="PROSITE" id="PS51745">
    <property type="entry name" value="PB1"/>
    <property type="match status" value="1"/>
</dbReference>
<gene>
    <name type="primary">ARF11</name>
    <name type="ordered locus">At2g46530</name>
    <name type="ORF">F11C10.34</name>
    <name type="ORF">F13A10.6</name>
</gene>
<comment type="function">
    <text evidence="5">Auxin response factors (ARFs) are transcriptional factors that bind specifically to the DNA sequence 5'-TGTCTC-3' found in the auxin-responsive promoter elements (AuxREs). Could act as transcriptional activator or repressor. Formation of heterodimers with Aux/IAA proteins may alter their ability to modulate early auxin response genes expression.</text>
</comment>
<comment type="subunit">
    <text evidence="1">Homodimers and heterodimers.</text>
</comment>
<comment type="subcellular location">
    <subcellularLocation>
        <location>Nucleus</location>
    </subcellularLocation>
</comment>
<comment type="alternative products">
    <event type="alternative splicing"/>
    <isoform>
        <id>Q9ZPY6-1</id>
        <name>1</name>
        <sequence type="displayed"/>
    </isoform>
    <isoform>
        <id>Q9ZPY6-2</id>
        <name>2</name>
        <sequence type="described" ref="VSP_037316 VSP_037317"/>
    </isoform>
    <isoform>
        <id>Q9ZPY6-3</id>
        <name>3</name>
        <sequence type="described" ref="VSP_037315 VSP_037318"/>
    </isoform>
</comment>
<comment type="domain">
    <text>Interactions between auxin response factors (ARFs) and Aux/IAA proteins occur through their C-terminal dimerization domains III and IV.</text>
</comment>
<comment type="similarity">
    <text evidence="8">Belongs to the ARF family.</text>
</comment>
<comment type="sequence caution" evidence="8">
    <conflict type="miscellaneous discrepancy">
        <sequence resource="EMBL" id="BX837073"/>
    </conflict>
    <text>Sequencing errors.</text>
</comment>
<reference key="1">
    <citation type="journal article" date="2005" name="Plant Cell">
        <title>Functional genomic analysis of the AUXIN RESPONSE FACTOR gene family members in Arabidopsis thaliana: unique and overlapping functions of ARF7 and ARF19.</title>
        <authorList>
            <person name="Okushima Y."/>
            <person name="Overvoorde P.J."/>
            <person name="Arima K."/>
            <person name="Alonso J.M."/>
            <person name="Chan A."/>
            <person name="Chang C."/>
            <person name="Ecker J.R."/>
            <person name="Hughes B."/>
            <person name="Lui A."/>
            <person name="Nguyen D."/>
            <person name="Onodera C."/>
            <person name="Quach H."/>
            <person name="Smith A."/>
            <person name="Yu G."/>
            <person name="Theologis A."/>
        </authorList>
    </citation>
    <scope>NUCLEOTIDE SEQUENCE [MRNA] (ISOFORM 1)</scope>
    <source>
        <strain>cv. Columbia</strain>
    </source>
</reference>
<reference key="2">
    <citation type="journal article" date="1999" name="Nature">
        <title>Sequence and analysis of chromosome 2 of the plant Arabidopsis thaliana.</title>
        <authorList>
            <person name="Lin X."/>
            <person name="Kaul S."/>
            <person name="Rounsley S.D."/>
            <person name="Shea T.P."/>
            <person name="Benito M.-I."/>
            <person name="Town C.D."/>
            <person name="Fujii C.Y."/>
            <person name="Mason T.M."/>
            <person name="Bowman C.L."/>
            <person name="Barnstead M.E."/>
            <person name="Feldblyum T.V."/>
            <person name="Buell C.R."/>
            <person name="Ketchum K.A."/>
            <person name="Lee J.J."/>
            <person name="Ronning C.M."/>
            <person name="Koo H.L."/>
            <person name="Moffat K.S."/>
            <person name="Cronin L.A."/>
            <person name="Shen M."/>
            <person name="Pai G."/>
            <person name="Van Aken S."/>
            <person name="Umayam L."/>
            <person name="Tallon L.J."/>
            <person name="Gill J.E."/>
            <person name="Adams M.D."/>
            <person name="Carrera A.J."/>
            <person name="Creasy T.H."/>
            <person name="Goodman H.M."/>
            <person name="Somerville C.R."/>
            <person name="Copenhaver G.P."/>
            <person name="Preuss D."/>
            <person name="Nierman W.C."/>
            <person name="White O."/>
            <person name="Eisen J.A."/>
            <person name="Salzberg S.L."/>
            <person name="Fraser C.M."/>
            <person name="Venter J.C."/>
        </authorList>
    </citation>
    <scope>NUCLEOTIDE SEQUENCE [LARGE SCALE GENOMIC DNA]</scope>
    <source>
        <strain>cv. Columbia</strain>
    </source>
</reference>
<reference key="3">
    <citation type="journal article" date="2017" name="Plant J.">
        <title>Araport11: a complete reannotation of the Arabidopsis thaliana reference genome.</title>
        <authorList>
            <person name="Cheng C.Y."/>
            <person name="Krishnakumar V."/>
            <person name="Chan A.P."/>
            <person name="Thibaud-Nissen F."/>
            <person name="Schobel S."/>
            <person name="Town C.D."/>
        </authorList>
    </citation>
    <scope>GENOME REANNOTATION</scope>
    <source>
        <strain>cv. Columbia</strain>
    </source>
</reference>
<reference key="4">
    <citation type="journal article" date="2004" name="Genome Res.">
        <title>Whole genome sequence comparisons and 'full-length' cDNA sequences: a combined approach to evaluate and improve Arabidopsis genome annotation.</title>
        <authorList>
            <person name="Castelli V."/>
            <person name="Aury J.-M."/>
            <person name="Jaillon O."/>
            <person name="Wincker P."/>
            <person name="Clepet C."/>
            <person name="Menard M."/>
            <person name="Cruaud C."/>
            <person name="Quetier F."/>
            <person name="Scarpelli C."/>
            <person name="Schaechter V."/>
            <person name="Temple G."/>
            <person name="Caboche M."/>
            <person name="Weissenbach J."/>
            <person name="Salanoubat M."/>
        </authorList>
    </citation>
    <scope>NUCLEOTIDE SEQUENCE [LARGE SCALE MRNA] (ISOFORM 3)</scope>
    <source>
        <strain>cv. Columbia</strain>
    </source>
</reference>
<reference key="5">
    <citation type="submission" date="2006-07" db="EMBL/GenBank/DDBJ databases">
        <title>Large-scale analysis of RIKEN Arabidopsis full-length (RAFL) cDNAs.</title>
        <authorList>
            <person name="Totoki Y."/>
            <person name="Seki M."/>
            <person name="Ishida J."/>
            <person name="Nakajima M."/>
            <person name="Enju A."/>
            <person name="Kamiya A."/>
            <person name="Narusaka M."/>
            <person name="Shin-i T."/>
            <person name="Nakagawa M."/>
            <person name="Sakamoto N."/>
            <person name="Oishi K."/>
            <person name="Kohara Y."/>
            <person name="Kobayashi M."/>
            <person name="Toyoda A."/>
            <person name="Sakaki Y."/>
            <person name="Sakurai T."/>
            <person name="Iida K."/>
            <person name="Akiyama K."/>
            <person name="Satou M."/>
            <person name="Toyoda T."/>
            <person name="Konagaya A."/>
            <person name="Carninci P."/>
            <person name="Kawai J."/>
            <person name="Hayashizaki Y."/>
            <person name="Shinozaki K."/>
        </authorList>
    </citation>
    <scope>NUCLEOTIDE SEQUENCE [LARGE SCALE MRNA] (ISOFORM 2)</scope>
    <source>
        <strain>cv. Columbia</strain>
    </source>
</reference>
<reference key="6">
    <citation type="journal article" date="2002" name="Plant Mol. Biol.">
        <title>Auxin-responsive gene expression: genes, promoters and regulatory factors.</title>
        <authorList>
            <person name="Hagen G."/>
            <person name="Guilfoyle T.J."/>
        </authorList>
    </citation>
    <scope>GENE FAMILY</scope>
    <scope>NOMENCLATURE</scope>
    <scope>FUNCTION</scope>
</reference>
<reference key="7">
    <citation type="journal article" date="2008" name="Trends Plant Sci.">
        <title>The plant B3 superfamily.</title>
        <authorList>
            <person name="Swaminathan K."/>
            <person name="Peterson K."/>
            <person name="Jack T."/>
        </authorList>
    </citation>
    <scope>GENE FAMILY</scope>
</reference>
<keyword id="KW-0025">Alternative splicing</keyword>
<keyword id="KW-0927">Auxin signaling pathway</keyword>
<keyword id="KW-0238">DNA-binding</keyword>
<keyword id="KW-0539">Nucleus</keyword>
<keyword id="KW-1185">Reference proteome</keyword>
<keyword id="KW-0804">Transcription</keyword>
<keyword id="KW-0805">Transcription regulation</keyword>
<accession>Q9ZPY6</accession>
<accession>Q0WMA6</accession>
<accession>Q0WMQ7</accession>
<accession>Q3E6N4</accession>
<accession>Q5IRX6</accession>
<sequence length="622" mass="69663">MSQTSLEPLIISIIKLQILQLWLKLIAVGWNLGSNDDELYTELWKACAGPLVEVPRYGERVFYFPQGHMEQLVASTNQGVVDQEIPVFNLPPKILCRVLSVTLKAEHETDEVYAQITLQPEEDQSEPTSLDPPLVEPAKPTVDSFVKILTASDTSTHGGFSVLRKHATECLPSLDMTQPTPTQELVARDLHGYEWRFKHIFRGQPRRHLLTTGWSTFVTSKRLVAGDAFVFLRGETGDLRVGVRRLAKQQSTMPASVISSQSMRLGVLATASHAVTTTTIFVVFYKPRISQFIISVNKYMMAMKNGFSLGMRYRMRFEGEESPERIFTGTIIGSGDLSSQWPASKWRSLQIQWDEPSSIQRPNKVSPWEIEPFSPSALTPTPTQQQSKSKRSRPISEITGSPVASSFLSSFSQSHESNPSVKLLFQDPATERNSNKSVFSSGLQCKITEAPVTSSCRLFGFDLTSKPASATIPHDKQLISVDSNISDSTTKCQDPNSSNSPKEQKQQTSTRSRIKVQMQGTAVGRAVDLTLLRSYDELIKELEKMFEIEGELSPKDKWAIVFTDDEGDRMLVGDDPWNEFCKMAKKLFIYPSDEVKKMRSKSLLGDKGTIVNLESDQRTVHV</sequence>